<evidence type="ECO:0000255" key="1">
    <source>
        <dbReference type="HAMAP-Rule" id="MF_00208"/>
    </source>
</evidence>
<name>MURE_PROMP</name>
<sequence>MRSIKLHRLLDLVGIIPSLDLIDKEINNISFNSKEVQKGTLFLGMPGLNVDGGKYCIEAIENGAEAAIIGSAAKQKIGSIDRERILVIEDNLDYIFGQIVSEFWNRPSRKLKLIGVTGTNGKTTITFLLEYLLKKLGKKTALFGTLFNRWPGFSEVASHTTDFADKLQKKLNAAVDAESEFAILEVSSHSIAQNRISGCEFEAAIFTNLTQDHLDYHSDMESYFQTKRKLFFPPYLKDKDGISVLNHDDLWISKLSSDLEKRSSLVSTKITKSEFKNDGFFYVTDKQFTESGSTCIFHTPKEKIKLFVPLVGEFNLMNAIQAITILYKLNFSLKDLSKLIQSFPGAPGRMEKIEIDNNDVSRSLPIVIIDYAHTPDGLKKVLQSIKKLCKGKLITVFGCGGDRDRSKRPLMGSIAEEFSDHVFITSDNPRSEEPQQIVNDILMGIEKREKITFDIDRFKAINESIKFANKEDIVLIAGKGHEDYQILNDKVINFDDRKIAQKLLQEKSKSK</sequence>
<dbReference type="EC" id="6.3.2.13" evidence="1"/>
<dbReference type="EMBL" id="BX548174">
    <property type="protein sequence ID" value="CAE18872.1"/>
    <property type="molecule type" value="Genomic_DNA"/>
</dbReference>
<dbReference type="RefSeq" id="WP_011132049.1">
    <property type="nucleotide sequence ID" value="NC_005072.1"/>
</dbReference>
<dbReference type="SMR" id="Q7V2Q8"/>
<dbReference type="STRING" id="59919.PMM0413"/>
<dbReference type="KEGG" id="pmm:PMM0413"/>
<dbReference type="eggNOG" id="COG0769">
    <property type="taxonomic scope" value="Bacteria"/>
</dbReference>
<dbReference type="HOGENOM" id="CLU_022291_4_1_3"/>
<dbReference type="OrthoDB" id="9800958at2"/>
<dbReference type="UniPathway" id="UPA00219"/>
<dbReference type="Proteomes" id="UP000001026">
    <property type="component" value="Chromosome"/>
</dbReference>
<dbReference type="GO" id="GO:0005737">
    <property type="term" value="C:cytoplasm"/>
    <property type="evidence" value="ECO:0007669"/>
    <property type="project" value="UniProtKB-SubCell"/>
</dbReference>
<dbReference type="GO" id="GO:0005524">
    <property type="term" value="F:ATP binding"/>
    <property type="evidence" value="ECO:0007669"/>
    <property type="project" value="UniProtKB-UniRule"/>
</dbReference>
<dbReference type="GO" id="GO:0000287">
    <property type="term" value="F:magnesium ion binding"/>
    <property type="evidence" value="ECO:0007669"/>
    <property type="project" value="UniProtKB-UniRule"/>
</dbReference>
<dbReference type="GO" id="GO:0004326">
    <property type="term" value="F:tetrahydrofolylpolyglutamate synthase activity"/>
    <property type="evidence" value="ECO:0007669"/>
    <property type="project" value="InterPro"/>
</dbReference>
<dbReference type="GO" id="GO:0008765">
    <property type="term" value="F:UDP-N-acetylmuramoylalanyl-D-glutamate-2,6-diaminopimelate ligase activity"/>
    <property type="evidence" value="ECO:0007669"/>
    <property type="project" value="UniProtKB-UniRule"/>
</dbReference>
<dbReference type="GO" id="GO:0051301">
    <property type="term" value="P:cell division"/>
    <property type="evidence" value="ECO:0007669"/>
    <property type="project" value="UniProtKB-KW"/>
</dbReference>
<dbReference type="GO" id="GO:0071555">
    <property type="term" value="P:cell wall organization"/>
    <property type="evidence" value="ECO:0007669"/>
    <property type="project" value="UniProtKB-KW"/>
</dbReference>
<dbReference type="GO" id="GO:0009252">
    <property type="term" value="P:peptidoglycan biosynthetic process"/>
    <property type="evidence" value="ECO:0007669"/>
    <property type="project" value="UniProtKB-UniRule"/>
</dbReference>
<dbReference type="GO" id="GO:0008360">
    <property type="term" value="P:regulation of cell shape"/>
    <property type="evidence" value="ECO:0007669"/>
    <property type="project" value="UniProtKB-KW"/>
</dbReference>
<dbReference type="FunFam" id="3.90.190.20:FF:000006">
    <property type="entry name" value="UDP-N-acetylmuramoyl-L-alanyl-D-glutamate--2,6-diaminopimelate ligase"/>
    <property type="match status" value="1"/>
</dbReference>
<dbReference type="Gene3D" id="3.90.190.20">
    <property type="entry name" value="Mur ligase, C-terminal domain"/>
    <property type="match status" value="1"/>
</dbReference>
<dbReference type="Gene3D" id="3.40.1190.10">
    <property type="entry name" value="Mur-like, catalytic domain"/>
    <property type="match status" value="1"/>
</dbReference>
<dbReference type="Gene3D" id="3.40.1390.10">
    <property type="entry name" value="MurE/MurF, N-terminal domain"/>
    <property type="match status" value="1"/>
</dbReference>
<dbReference type="HAMAP" id="MF_00208">
    <property type="entry name" value="MurE"/>
    <property type="match status" value="1"/>
</dbReference>
<dbReference type="InterPro" id="IPR018109">
    <property type="entry name" value="Folylpolyglutamate_synth_CS"/>
</dbReference>
<dbReference type="InterPro" id="IPR036565">
    <property type="entry name" value="Mur-like_cat_sf"/>
</dbReference>
<dbReference type="InterPro" id="IPR004101">
    <property type="entry name" value="Mur_ligase_C"/>
</dbReference>
<dbReference type="InterPro" id="IPR036615">
    <property type="entry name" value="Mur_ligase_C_dom_sf"/>
</dbReference>
<dbReference type="InterPro" id="IPR013221">
    <property type="entry name" value="Mur_ligase_cen"/>
</dbReference>
<dbReference type="InterPro" id="IPR000713">
    <property type="entry name" value="Mur_ligase_N"/>
</dbReference>
<dbReference type="InterPro" id="IPR035911">
    <property type="entry name" value="MurE/MurF_N"/>
</dbReference>
<dbReference type="InterPro" id="IPR005761">
    <property type="entry name" value="UDP-N-AcMur-Glu-dNH2Pim_ligase"/>
</dbReference>
<dbReference type="NCBIfam" id="TIGR01085">
    <property type="entry name" value="murE"/>
    <property type="match status" value="1"/>
</dbReference>
<dbReference type="NCBIfam" id="NF001126">
    <property type="entry name" value="PRK00139.1-4"/>
    <property type="match status" value="1"/>
</dbReference>
<dbReference type="PANTHER" id="PTHR23135">
    <property type="entry name" value="MUR LIGASE FAMILY MEMBER"/>
    <property type="match status" value="1"/>
</dbReference>
<dbReference type="PANTHER" id="PTHR23135:SF4">
    <property type="entry name" value="UDP-N-ACETYLMURAMOYL-L-ALANYL-D-GLUTAMATE--2,6-DIAMINOPIMELATE LIGASE MURE HOMOLOG, CHLOROPLASTIC"/>
    <property type="match status" value="1"/>
</dbReference>
<dbReference type="Pfam" id="PF01225">
    <property type="entry name" value="Mur_ligase"/>
    <property type="match status" value="1"/>
</dbReference>
<dbReference type="Pfam" id="PF02875">
    <property type="entry name" value="Mur_ligase_C"/>
    <property type="match status" value="1"/>
</dbReference>
<dbReference type="Pfam" id="PF08245">
    <property type="entry name" value="Mur_ligase_M"/>
    <property type="match status" value="1"/>
</dbReference>
<dbReference type="SUPFAM" id="SSF53623">
    <property type="entry name" value="MurD-like peptide ligases, catalytic domain"/>
    <property type="match status" value="1"/>
</dbReference>
<dbReference type="SUPFAM" id="SSF53244">
    <property type="entry name" value="MurD-like peptide ligases, peptide-binding domain"/>
    <property type="match status" value="1"/>
</dbReference>
<dbReference type="SUPFAM" id="SSF63418">
    <property type="entry name" value="MurE/MurF N-terminal domain"/>
    <property type="match status" value="1"/>
</dbReference>
<gene>
    <name evidence="1" type="primary">murE</name>
    <name type="ordered locus">PMM0413</name>
</gene>
<organism>
    <name type="scientific">Prochlorococcus marinus subsp. pastoris (strain CCMP1986 / NIES-2087 / MED4)</name>
    <dbReference type="NCBI Taxonomy" id="59919"/>
    <lineage>
        <taxon>Bacteria</taxon>
        <taxon>Bacillati</taxon>
        <taxon>Cyanobacteriota</taxon>
        <taxon>Cyanophyceae</taxon>
        <taxon>Synechococcales</taxon>
        <taxon>Prochlorococcaceae</taxon>
        <taxon>Prochlorococcus</taxon>
    </lineage>
</organism>
<protein>
    <recommendedName>
        <fullName evidence="1">UDP-N-acetylmuramoyl-L-alanyl-D-glutamate--2,6-diaminopimelate ligase</fullName>
        <ecNumber evidence="1">6.3.2.13</ecNumber>
    </recommendedName>
    <alternativeName>
        <fullName evidence="1">Meso-A2pm-adding enzyme</fullName>
    </alternativeName>
    <alternativeName>
        <fullName evidence="1">Meso-diaminopimelate-adding enzyme</fullName>
    </alternativeName>
    <alternativeName>
        <fullName evidence="1">UDP-MurNAc-L-Ala-D-Glu:meso-diaminopimelate ligase</fullName>
    </alternativeName>
    <alternativeName>
        <fullName evidence="1">UDP-MurNAc-tripeptide synthetase</fullName>
    </alternativeName>
    <alternativeName>
        <fullName evidence="1">UDP-N-acetylmuramyl-tripeptide synthetase</fullName>
    </alternativeName>
</protein>
<proteinExistence type="inferred from homology"/>
<feature type="chain" id="PRO_0000101925" description="UDP-N-acetylmuramoyl-L-alanyl-D-glutamate--2,6-diaminopimelate ligase">
    <location>
        <begin position="1"/>
        <end position="511"/>
    </location>
</feature>
<feature type="short sequence motif" description="Meso-diaminopimelate recognition motif">
    <location>
        <begin position="427"/>
        <end position="430"/>
    </location>
</feature>
<feature type="binding site" evidence="1">
    <location>
        <position position="33"/>
    </location>
    <ligand>
        <name>UDP-N-acetyl-alpha-D-muramoyl-L-alanyl-D-glutamate</name>
        <dbReference type="ChEBI" id="CHEBI:83900"/>
    </ligand>
</feature>
<feature type="binding site" evidence="1">
    <location>
        <begin position="118"/>
        <end position="124"/>
    </location>
    <ligand>
        <name>ATP</name>
        <dbReference type="ChEBI" id="CHEBI:30616"/>
    </ligand>
</feature>
<feature type="binding site" evidence="1">
    <location>
        <begin position="160"/>
        <end position="161"/>
    </location>
    <ligand>
        <name>UDP-N-acetyl-alpha-D-muramoyl-L-alanyl-D-glutamate</name>
        <dbReference type="ChEBI" id="CHEBI:83900"/>
    </ligand>
</feature>
<feature type="binding site" evidence="1">
    <location>
        <position position="187"/>
    </location>
    <ligand>
        <name>UDP-N-acetyl-alpha-D-muramoyl-L-alanyl-D-glutamate</name>
        <dbReference type="ChEBI" id="CHEBI:83900"/>
    </ligand>
</feature>
<feature type="binding site" evidence="1">
    <location>
        <position position="193"/>
    </location>
    <ligand>
        <name>UDP-N-acetyl-alpha-D-muramoyl-L-alanyl-D-glutamate</name>
        <dbReference type="ChEBI" id="CHEBI:83900"/>
    </ligand>
</feature>
<feature type="binding site" evidence="1">
    <location>
        <position position="195"/>
    </location>
    <ligand>
        <name>UDP-N-acetyl-alpha-D-muramoyl-L-alanyl-D-glutamate</name>
        <dbReference type="ChEBI" id="CHEBI:83900"/>
    </ligand>
</feature>
<feature type="binding site" evidence="1">
    <location>
        <position position="403"/>
    </location>
    <ligand>
        <name>meso-2,6-diaminopimelate</name>
        <dbReference type="ChEBI" id="CHEBI:57791"/>
    </ligand>
</feature>
<feature type="binding site" evidence="1">
    <location>
        <begin position="427"/>
        <end position="430"/>
    </location>
    <ligand>
        <name>meso-2,6-diaminopimelate</name>
        <dbReference type="ChEBI" id="CHEBI:57791"/>
    </ligand>
</feature>
<feature type="binding site" evidence="1">
    <location>
        <position position="478"/>
    </location>
    <ligand>
        <name>meso-2,6-diaminopimelate</name>
        <dbReference type="ChEBI" id="CHEBI:57791"/>
    </ligand>
</feature>
<feature type="binding site" evidence="1">
    <location>
        <position position="482"/>
    </location>
    <ligand>
        <name>meso-2,6-diaminopimelate</name>
        <dbReference type="ChEBI" id="CHEBI:57791"/>
    </ligand>
</feature>
<feature type="modified residue" description="N6-carboxylysine" evidence="1">
    <location>
        <position position="227"/>
    </location>
</feature>
<accession>Q7V2Q8</accession>
<reference key="1">
    <citation type="journal article" date="2003" name="Nature">
        <title>Genome divergence in two Prochlorococcus ecotypes reflects oceanic niche differentiation.</title>
        <authorList>
            <person name="Rocap G."/>
            <person name="Larimer F.W."/>
            <person name="Lamerdin J.E."/>
            <person name="Malfatti S."/>
            <person name="Chain P."/>
            <person name="Ahlgren N.A."/>
            <person name="Arellano A."/>
            <person name="Coleman M."/>
            <person name="Hauser L."/>
            <person name="Hess W.R."/>
            <person name="Johnson Z.I."/>
            <person name="Land M.L."/>
            <person name="Lindell D."/>
            <person name="Post A.F."/>
            <person name="Regala W."/>
            <person name="Shah M."/>
            <person name="Shaw S.L."/>
            <person name="Steglich C."/>
            <person name="Sullivan M.B."/>
            <person name="Ting C.S."/>
            <person name="Tolonen A."/>
            <person name="Webb E.A."/>
            <person name="Zinser E.R."/>
            <person name="Chisholm S.W."/>
        </authorList>
    </citation>
    <scope>NUCLEOTIDE SEQUENCE [LARGE SCALE GENOMIC DNA]</scope>
    <source>
        <strain>CCMP1986 / NIES-2087 / MED4</strain>
    </source>
</reference>
<comment type="function">
    <text evidence="1">Catalyzes the addition of meso-diaminopimelic acid to the nucleotide precursor UDP-N-acetylmuramoyl-L-alanyl-D-glutamate (UMAG) in the biosynthesis of bacterial cell-wall peptidoglycan.</text>
</comment>
<comment type="catalytic activity">
    <reaction evidence="1">
        <text>UDP-N-acetyl-alpha-D-muramoyl-L-alanyl-D-glutamate + meso-2,6-diaminopimelate + ATP = UDP-N-acetyl-alpha-D-muramoyl-L-alanyl-gamma-D-glutamyl-meso-2,6-diaminopimelate + ADP + phosphate + H(+)</text>
        <dbReference type="Rhea" id="RHEA:23676"/>
        <dbReference type="ChEBI" id="CHEBI:15378"/>
        <dbReference type="ChEBI" id="CHEBI:30616"/>
        <dbReference type="ChEBI" id="CHEBI:43474"/>
        <dbReference type="ChEBI" id="CHEBI:57791"/>
        <dbReference type="ChEBI" id="CHEBI:83900"/>
        <dbReference type="ChEBI" id="CHEBI:83905"/>
        <dbReference type="ChEBI" id="CHEBI:456216"/>
        <dbReference type="EC" id="6.3.2.13"/>
    </reaction>
</comment>
<comment type="cofactor">
    <cofactor evidence="1">
        <name>Mg(2+)</name>
        <dbReference type="ChEBI" id="CHEBI:18420"/>
    </cofactor>
</comment>
<comment type="pathway">
    <text evidence="1">Cell wall biogenesis; peptidoglycan biosynthesis.</text>
</comment>
<comment type="subcellular location">
    <subcellularLocation>
        <location evidence="1">Cytoplasm</location>
    </subcellularLocation>
</comment>
<comment type="PTM">
    <text evidence="1">Carboxylation is probably crucial for Mg(2+) binding and, consequently, for the gamma-phosphate positioning of ATP.</text>
</comment>
<comment type="similarity">
    <text evidence="1">Belongs to the MurCDEF family. MurE subfamily.</text>
</comment>
<keyword id="KW-0067">ATP-binding</keyword>
<keyword id="KW-0131">Cell cycle</keyword>
<keyword id="KW-0132">Cell division</keyword>
<keyword id="KW-0133">Cell shape</keyword>
<keyword id="KW-0961">Cell wall biogenesis/degradation</keyword>
<keyword id="KW-0963">Cytoplasm</keyword>
<keyword id="KW-0436">Ligase</keyword>
<keyword id="KW-0460">Magnesium</keyword>
<keyword id="KW-0547">Nucleotide-binding</keyword>
<keyword id="KW-0573">Peptidoglycan synthesis</keyword>